<proteinExistence type="inferred from homology"/>
<keyword id="KW-1185">Reference proteome</keyword>
<accession>O28475</accession>
<reference key="1">
    <citation type="journal article" date="1997" name="Nature">
        <title>The complete genome sequence of the hyperthermophilic, sulphate-reducing archaeon Archaeoglobus fulgidus.</title>
        <authorList>
            <person name="Klenk H.-P."/>
            <person name="Clayton R.A."/>
            <person name="Tomb J.-F."/>
            <person name="White O."/>
            <person name="Nelson K.E."/>
            <person name="Ketchum K.A."/>
            <person name="Dodson R.J."/>
            <person name="Gwinn M.L."/>
            <person name="Hickey E.K."/>
            <person name="Peterson J.D."/>
            <person name="Richardson D.L."/>
            <person name="Kerlavage A.R."/>
            <person name="Graham D.E."/>
            <person name="Kyrpides N.C."/>
            <person name="Fleischmann R.D."/>
            <person name="Quackenbush J."/>
            <person name="Lee N.H."/>
            <person name="Sutton G.G."/>
            <person name="Gill S.R."/>
            <person name="Kirkness E.F."/>
            <person name="Dougherty B.A."/>
            <person name="McKenney K."/>
            <person name="Adams M.D."/>
            <person name="Loftus B.J."/>
            <person name="Peterson S.N."/>
            <person name="Reich C.I."/>
            <person name="McNeil L.K."/>
            <person name="Badger J.H."/>
            <person name="Glodek A."/>
            <person name="Zhou L."/>
            <person name="Overbeek R."/>
            <person name="Gocayne J.D."/>
            <person name="Weidman J.F."/>
            <person name="McDonald L.A."/>
            <person name="Utterback T.R."/>
            <person name="Cotton M.D."/>
            <person name="Spriggs T."/>
            <person name="Artiach P."/>
            <person name="Kaine B.P."/>
            <person name="Sykes S.M."/>
            <person name="Sadow P.W."/>
            <person name="D'Andrea K.P."/>
            <person name="Bowman C."/>
            <person name="Fujii C."/>
            <person name="Garland S.A."/>
            <person name="Mason T.M."/>
            <person name="Olsen G.J."/>
            <person name="Fraser C.M."/>
            <person name="Smith H.O."/>
            <person name="Woese C.R."/>
            <person name="Venter J.C."/>
        </authorList>
    </citation>
    <scope>NUCLEOTIDE SEQUENCE [LARGE SCALE GENOMIC DNA]</scope>
    <source>
        <strain>ATCC 49558 / DSM 4304 / JCM 9628 / NBRC 100126 / VC-16</strain>
    </source>
</reference>
<gene>
    <name type="ordered locus">AF_1799</name>
</gene>
<dbReference type="EMBL" id="AE000782">
    <property type="protein sequence ID" value="AAB89448.1"/>
    <property type="status" value="ALT_INIT"/>
    <property type="molecule type" value="Genomic_DNA"/>
</dbReference>
<dbReference type="PIR" id="F69474">
    <property type="entry name" value="F69474"/>
</dbReference>
<dbReference type="RefSeq" id="WP_048064464.1">
    <property type="nucleotide sequence ID" value="NC_000917.1"/>
</dbReference>
<dbReference type="SMR" id="O28475"/>
<dbReference type="STRING" id="224325.AF_1799"/>
<dbReference type="PaxDb" id="224325-AF_1799"/>
<dbReference type="DNASU" id="1485022"/>
<dbReference type="EnsemblBacteria" id="AAB89448">
    <property type="protein sequence ID" value="AAB89448"/>
    <property type="gene ID" value="AF_1799"/>
</dbReference>
<dbReference type="KEGG" id="afu:AF_1799"/>
<dbReference type="eggNOG" id="arCOG02640">
    <property type="taxonomic scope" value="Archaea"/>
</dbReference>
<dbReference type="HOGENOM" id="CLU_104916_0_0_2"/>
<dbReference type="OrthoDB" id="123511at2157"/>
<dbReference type="PhylomeDB" id="O28475"/>
<dbReference type="Proteomes" id="UP000002199">
    <property type="component" value="Chromosome"/>
</dbReference>
<dbReference type="Gene3D" id="1.20.58.220">
    <property type="entry name" value="Phosphate transport system protein phou homolog 2, domain 2"/>
    <property type="match status" value="1"/>
</dbReference>
<dbReference type="InterPro" id="IPR002727">
    <property type="entry name" value="DUF47"/>
</dbReference>
<dbReference type="InterPro" id="IPR038078">
    <property type="entry name" value="PhoU-like_sf"/>
</dbReference>
<dbReference type="InterPro" id="IPR018445">
    <property type="entry name" value="Put_Phosphate_transp_reg"/>
</dbReference>
<dbReference type="NCBIfam" id="TIGR00153">
    <property type="entry name" value="TIGR00153 family protein"/>
    <property type="match status" value="1"/>
</dbReference>
<dbReference type="PANTHER" id="PTHR36536">
    <property type="entry name" value="UPF0111 PROTEIN HI_1603"/>
    <property type="match status" value="1"/>
</dbReference>
<dbReference type="PANTHER" id="PTHR36536:SF3">
    <property type="entry name" value="UPF0111 PROTEIN HI_1603"/>
    <property type="match status" value="1"/>
</dbReference>
<dbReference type="Pfam" id="PF01865">
    <property type="entry name" value="PhoU_div"/>
    <property type="match status" value="1"/>
</dbReference>
<dbReference type="SUPFAM" id="SSF109755">
    <property type="entry name" value="PhoU-like"/>
    <property type="match status" value="1"/>
</dbReference>
<feature type="chain" id="PRO_0000154911" description="UPF0111 protein AF_1799">
    <location>
        <begin position="1"/>
        <end position="226"/>
    </location>
</feature>
<sequence length="226" mass="26384">MKFFRSVGEVFGYSPFRSLAQHARMCGRAVGLLQQQFEALRRGNYEEVEELREEIDELEHHADQIKEEIRGNVTKSLMLPVDRHDLLEFLKVQDDILNNCEHVGHMVTFRKVSAPEDVWDEFLVLLSKLMEIVNNYEEMVERIMQLVETSFSKKEVNRALEYVPIIEQLEHECDLIQIGLHTKLFNLENSNPLDIQLMVTWVVHLGYVANAAARASDRFRIMILGR</sequence>
<comment type="similarity">
    <text evidence="1">Belongs to the UPF0111 family.</text>
</comment>
<comment type="sequence caution" evidence="1">
    <conflict type="erroneous initiation">
        <sequence resource="EMBL-CDS" id="AAB89448"/>
    </conflict>
</comment>
<organism>
    <name type="scientific">Archaeoglobus fulgidus (strain ATCC 49558 / DSM 4304 / JCM 9628 / NBRC 100126 / VC-16)</name>
    <dbReference type="NCBI Taxonomy" id="224325"/>
    <lineage>
        <taxon>Archaea</taxon>
        <taxon>Methanobacteriati</taxon>
        <taxon>Methanobacteriota</taxon>
        <taxon>Archaeoglobi</taxon>
        <taxon>Archaeoglobales</taxon>
        <taxon>Archaeoglobaceae</taxon>
        <taxon>Archaeoglobus</taxon>
    </lineage>
</organism>
<evidence type="ECO:0000305" key="1"/>
<protein>
    <recommendedName>
        <fullName>UPF0111 protein AF_1799</fullName>
    </recommendedName>
</protein>
<name>Y1799_ARCFU</name>